<name>OSB11_MOUSE</name>
<evidence type="ECO:0000250" key="1"/>
<evidence type="ECO:0000250" key="2">
    <source>
        <dbReference type="UniProtKB" id="Q9BXB4"/>
    </source>
</evidence>
<evidence type="ECO:0000255" key="3">
    <source>
        <dbReference type="PROSITE-ProRule" id="PRU00145"/>
    </source>
</evidence>
<evidence type="ECO:0000256" key="4">
    <source>
        <dbReference type="SAM" id="MobiDB-lite"/>
    </source>
</evidence>
<evidence type="ECO:0000305" key="5"/>
<evidence type="ECO:0007744" key="6">
    <source>
    </source>
</evidence>
<evidence type="ECO:0007744" key="7">
    <source>
    </source>
</evidence>
<evidence type="ECO:0007744" key="8">
    <source>
    </source>
</evidence>
<feature type="chain" id="PRO_0000100382" description="Oxysterol-binding protein-related protein 11">
    <location>
        <begin position="1"/>
        <end position="751"/>
    </location>
</feature>
<feature type="domain" description="PH" evidence="3">
    <location>
        <begin position="63"/>
        <end position="160"/>
    </location>
</feature>
<feature type="region of interest" description="Disordered" evidence="4">
    <location>
        <begin position="1"/>
        <end position="57"/>
    </location>
</feature>
<feature type="region of interest" description="Disordered" evidence="4">
    <location>
        <begin position="475"/>
        <end position="497"/>
    </location>
</feature>
<feature type="region of interest" description="Disordered" evidence="4">
    <location>
        <begin position="694"/>
        <end position="716"/>
    </location>
</feature>
<feature type="compositionally biased region" description="Low complexity" evidence="4">
    <location>
        <begin position="31"/>
        <end position="52"/>
    </location>
</feature>
<feature type="modified residue" description="N-acetylmethionine" evidence="2">
    <location>
        <position position="1"/>
    </location>
</feature>
<feature type="modified residue" description="Phosphoserine" evidence="7">
    <location>
        <position position="15"/>
    </location>
</feature>
<feature type="modified residue" description="Phosphothreonine" evidence="2">
    <location>
        <position position="27"/>
    </location>
</feature>
<feature type="modified residue" description="Phosphoserine" evidence="8">
    <location>
        <position position="177"/>
    </location>
</feature>
<feature type="modified residue" description="Phosphoserine" evidence="8">
    <location>
        <position position="179"/>
    </location>
</feature>
<feature type="modified residue" description="Phosphoserine" evidence="6 8">
    <location>
        <position position="182"/>
    </location>
</feature>
<feature type="modified residue" description="Phosphoserine" evidence="6 8">
    <location>
        <position position="186"/>
    </location>
</feature>
<feature type="modified residue" description="Phosphoserine" evidence="2">
    <location>
        <position position="189"/>
    </location>
</feature>
<feature type="modified residue" description="Phosphoserine" evidence="6 8">
    <location>
        <position position="194"/>
    </location>
</feature>
<dbReference type="EMBL" id="BC035278">
    <property type="protein sequence ID" value="AAH35278.1"/>
    <property type="status" value="ALT_INIT"/>
    <property type="molecule type" value="mRNA"/>
</dbReference>
<dbReference type="BMRB" id="Q8CI95"/>
<dbReference type="SMR" id="Q8CI95"/>
<dbReference type="FunCoup" id="Q8CI95">
    <property type="interactions" value="2463"/>
</dbReference>
<dbReference type="IntAct" id="Q8CI95">
    <property type="interactions" value="1"/>
</dbReference>
<dbReference type="MINT" id="Q8CI95"/>
<dbReference type="STRING" id="10090.ENSMUSP00000039632"/>
<dbReference type="GlyGen" id="Q8CI95">
    <property type="glycosylation" value="2 sites, 1 O-linked glycan (1 site)"/>
</dbReference>
<dbReference type="iPTMnet" id="Q8CI95"/>
<dbReference type="PhosphoSitePlus" id="Q8CI95"/>
<dbReference type="jPOST" id="Q8CI95"/>
<dbReference type="PaxDb" id="10090-ENSMUSP00000039632"/>
<dbReference type="PeptideAtlas" id="Q8CI95"/>
<dbReference type="ProteomicsDB" id="294349"/>
<dbReference type="Pumba" id="Q8CI95"/>
<dbReference type="AGR" id="MGI:2146553"/>
<dbReference type="MGI" id="MGI:2146553">
    <property type="gene designation" value="Osbpl11"/>
</dbReference>
<dbReference type="eggNOG" id="KOG2210">
    <property type="taxonomic scope" value="Eukaryota"/>
</dbReference>
<dbReference type="InParanoid" id="Q8CI95"/>
<dbReference type="PhylomeDB" id="Q8CI95"/>
<dbReference type="Reactome" id="R-MMU-9013407">
    <property type="pathway name" value="RHOH GTPase cycle"/>
</dbReference>
<dbReference type="ChiTaRS" id="Osbpl11">
    <property type="organism name" value="mouse"/>
</dbReference>
<dbReference type="PRO" id="PR:Q8CI95"/>
<dbReference type="Proteomes" id="UP000000589">
    <property type="component" value="Unplaced"/>
</dbReference>
<dbReference type="RNAct" id="Q8CI95">
    <property type="molecule type" value="protein"/>
</dbReference>
<dbReference type="GO" id="GO:0005794">
    <property type="term" value="C:Golgi apparatus"/>
    <property type="evidence" value="ECO:0007669"/>
    <property type="project" value="UniProtKB-SubCell"/>
</dbReference>
<dbReference type="GO" id="GO:0031902">
    <property type="term" value="C:late endosome membrane"/>
    <property type="evidence" value="ECO:0007669"/>
    <property type="project" value="UniProtKB-SubCell"/>
</dbReference>
<dbReference type="GO" id="GO:0008289">
    <property type="term" value="F:lipid binding"/>
    <property type="evidence" value="ECO:0007669"/>
    <property type="project" value="UniProtKB-KW"/>
</dbReference>
<dbReference type="GO" id="GO:0006869">
    <property type="term" value="P:lipid transport"/>
    <property type="evidence" value="ECO:0007669"/>
    <property type="project" value="UniProtKB-KW"/>
</dbReference>
<dbReference type="CDD" id="cd13291">
    <property type="entry name" value="PH_ORP10_ORP11"/>
    <property type="match status" value="1"/>
</dbReference>
<dbReference type="FunFam" id="1.10.287.2720:FF:000001">
    <property type="entry name" value="Oxysterol-binding OBPalpha"/>
    <property type="match status" value="1"/>
</dbReference>
<dbReference type="FunFam" id="2.30.29.30:FF:000154">
    <property type="entry name" value="Oxysterol-binding protein"/>
    <property type="match status" value="1"/>
</dbReference>
<dbReference type="FunFam" id="2.40.160.120:FF:000002">
    <property type="entry name" value="Oxysterol-binding protein"/>
    <property type="match status" value="1"/>
</dbReference>
<dbReference type="FunFam" id="3.30.70.3490:FF:000001">
    <property type="entry name" value="Oxysterol-binding protein"/>
    <property type="match status" value="1"/>
</dbReference>
<dbReference type="Gene3D" id="1.10.287.2720">
    <property type="match status" value="1"/>
</dbReference>
<dbReference type="Gene3D" id="2.40.160.120">
    <property type="match status" value="1"/>
</dbReference>
<dbReference type="Gene3D" id="3.30.70.3490">
    <property type="match status" value="1"/>
</dbReference>
<dbReference type="Gene3D" id="2.30.29.30">
    <property type="entry name" value="Pleckstrin-homology domain (PH domain)/Phosphotyrosine-binding domain (PTB)"/>
    <property type="match status" value="1"/>
</dbReference>
<dbReference type="InterPro" id="IPR037239">
    <property type="entry name" value="OSBP_sf"/>
</dbReference>
<dbReference type="InterPro" id="IPR000648">
    <property type="entry name" value="Oxysterol-bd"/>
</dbReference>
<dbReference type="InterPro" id="IPR018494">
    <property type="entry name" value="Oxysterol-bd_CS"/>
</dbReference>
<dbReference type="InterPro" id="IPR011993">
    <property type="entry name" value="PH-like_dom_sf"/>
</dbReference>
<dbReference type="InterPro" id="IPR001849">
    <property type="entry name" value="PH_domain"/>
</dbReference>
<dbReference type="PANTHER" id="PTHR10972">
    <property type="entry name" value="OXYSTEROL-BINDING PROTEIN-RELATED"/>
    <property type="match status" value="1"/>
</dbReference>
<dbReference type="PANTHER" id="PTHR10972:SF46">
    <property type="entry name" value="OXYSTEROL-BINDING PROTEIN-RELATED PROTEIN 11"/>
    <property type="match status" value="1"/>
</dbReference>
<dbReference type="Pfam" id="PF01237">
    <property type="entry name" value="Oxysterol_BP"/>
    <property type="match status" value="2"/>
</dbReference>
<dbReference type="Pfam" id="PF00169">
    <property type="entry name" value="PH"/>
    <property type="match status" value="1"/>
</dbReference>
<dbReference type="SMART" id="SM00233">
    <property type="entry name" value="PH"/>
    <property type="match status" value="1"/>
</dbReference>
<dbReference type="SUPFAM" id="SSF144000">
    <property type="entry name" value="Oxysterol-binding protein-like"/>
    <property type="match status" value="1"/>
</dbReference>
<dbReference type="SUPFAM" id="SSF50729">
    <property type="entry name" value="PH domain-like"/>
    <property type="match status" value="1"/>
</dbReference>
<dbReference type="PROSITE" id="PS01013">
    <property type="entry name" value="OSBP"/>
    <property type="match status" value="1"/>
</dbReference>
<dbReference type="PROSITE" id="PS50003">
    <property type="entry name" value="PH_DOMAIN"/>
    <property type="match status" value="1"/>
</dbReference>
<keyword id="KW-0007">Acetylation</keyword>
<keyword id="KW-0967">Endosome</keyword>
<keyword id="KW-0333">Golgi apparatus</keyword>
<keyword id="KW-0445">Lipid transport</keyword>
<keyword id="KW-0446">Lipid-binding</keyword>
<keyword id="KW-0472">Membrane</keyword>
<keyword id="KW-0597">Phosphoprotein</keyword>
<keyword id="KW-1185">Reference proteome</keyword>
<keyword id="KW-0813">Transport</keyword>
<sequence>MQGGEPASVMKVSESEGKLEGLATAVTPNKNSGNSSCGGAISSSSSNSSRGGSAKGWQYSDHMESVNGYLMKYTNLVTGWQYRFFVLNNEAGLLEYFVNEQSRNQKPRGTLQLAGAVISPSDEDSHTFTVNAASGEQYKLRATDAKERQHWVSRLQICTQHHTEAIGKNNPPLKSRSFSLASSGNSPISQRRPSQNAMSFFNVGHSKLQSVNKRAHLHPDHLVEVREMMSHAEGQQRDLIRRIECLPASGLLSSLDQDLLMLKATSMATMNCLNDCFHILQLQHASHQKGALPSGTTIEWLEPKIPLSNHYKNGAEQPFATEPNKPMGAPEAQCVAESGVLAREPEDISADDEVEDTCDNKEDDLGAVEEQRSVILHLLSQLKLGMDLTRVVLPTFILEKRSLLEMYADFMSHPDLFIGITNGATPEDRMIRFVEYYLTSFHEGRKGAIAKKPYNPIIGETFHCSWRMPKSEVASGVSSSSSTPAITDHAPLPEEAPTQSVSDCYTVRFVAEQVSHHPPVSGFYAECAERKMCVNAHVWTKSKFLGMSIGVTMVGEGVLCLLEHGEEYTFSLPCAYARSILTVPWVELGGKVSVNCAKTGYSASITFHTKPFYGGKLHRVTAEVKYNLTNTVVCRVQGEWNSVLEFTYSNGETKFVDLAKLAVTKKRVRPLEKQDPFESRRLWKNVTDSLRESEIDKATEHKRSLEERQRTEERLRTETGTPWKTKYFIKEGDGWVYHKPLWKGIPSQPAE</sequence>
<proteinExistence type="evidence at protein level"/>
<accession>Q8CI95</accession>
<protein>
    <recommendedName>
        <fullName>Oxysterol-binding protein-related protein 11</fullName>
        <shortName>ORP-11</shortName>
        <shortName>OSBP-related protein 11</shortName>
    </recommendedName>
</protein>
<gene>
    <name type="primary">Osbpl11</name>
</gene>
<organism>
    <name type="scientific">Mus musculus</name>
    <name type="common">Mouse</name>
    <dbReference type="NCBI Taxonomy" id="10090"/>
    <lineage>
        <taxon>Eukaryota</taxon>
        <taxon>Metazoa</taxon>
        <taxon>Chordata</taxon>
        <taxon>Craniata</taxon>
        <taxon>Vertebrata</taxon>
        <taxon>Euteleostomi</taxon>
        <taxon>Mammalia</taxon>
        <taxon>Eutheria</taxon>
        <taxon>Euarchontoglires</taxon>
        <taxon>Glires</taxon>
        <taxon>Rodentia</taxon>
        <taxon>Myomorpha</taxon>
        <taxon>Muroidea</taxon>
        <taxon>Muridae</taxon>
        <taxon>Murinae</taxon>
        <taxon>Mus</taxon>
        <taxon>Mus</taxon>
    </lineage>
</organism>
<comment type="function">
    <text evidence="2">Plays a role in regulating ADIPOQ and FABP4 levels in differentiating adipocytes and is also involved in regulation of adipocyte triglyceride storage. Weakly binds 25-hydroxycholesterol. Interacts with OSBPL9 to function as lipid transfer proteins. Together they form a heterodimer that localizes at the ER-trans-Golgi membrane contact sites, and exchanges phosphatidylserine (1,2-diacyl-sn-glycero-3-phospho-L-serine, PS) for phosphatidylinositol-4-phosphate (1,2-diacyl-sn-glycero-3-phospho-(1D-myo-inositol 4-phosphate), PI(4)P) between the two organelles, a step that is critical for sphingomyelin synthesis in the Golgi complex.</text>
</comment>
<comment type="catalytic activity">
    <reaction evidence="2">
        <text>a 1,2-diacyl-sn-glycero-3-phospho-(1D-myo-inositol 4-phosphate)(out) + a 1,2-diacyl-sn-glycero-3-phospho-L-serine(in) = a 1,2-diacyl-sn-glycero-3-phospho-(1D-myo-inositol 4-phosphate)(in) + a 1,2-diacyl-sn-glycero-3-phospho-L-serine(out)</text>
        <dbReference type="Rhea" id="RHEA:81667"/>
        <dbReference type="ChEBI" id="CHEBI:57262"/>
        <dbReference type="ChEBI" id="CHEBI:58178"/>
    </reaction>
</comment>
<comment type="subunit">
    <text evidence="1">Heterodimer with OSBPL9.</text>
</comment>
<comment type="subcellular location">
    <subcellularLocation>
        <location evidence="1">Late endosome membrane</location>
    </subcellularLocation>
    <subcellularLocation>
        <location evidence="1">Golgi apparatus</location>
        <location evidence="1">trans-Golgi network membrane</location>
    </subcellularLocation>
    <text evidence="1">Localizes at the Golgi-late endosome interface.</text>
</comment>
<comment type="domain">
    <text evidence="1">The PH domain binds phosphoinositides.</text>
</comment>
<comment type="similarity">
    <text evidence="5">Belongs to the OSBP family.</text>
</comment>
<comment type="sequence caution" evidence="5">
    <conflict type="erroneous initiation">
        <sequence resource="EMBL-CDS" id="AAH35278"/>
    </conflict>
</comment>
<reference key="1">
    <citation type="journal article" date="2004" name="Genome Res.">
        <title>The status, quality, and expansion of the NIH full-length cDNA project: the Mammalian Gene Collection (MGC).</title>
        <authorList>
            <consortium name="The MGC Project Team"/>
        </authorList>
    </citation>
    <scope>NUCLEOTIDE SEQUENCE [LARGE SCALE MRNA]</scope>
    <source>
        <strain>FVB/N</strain>
        <tissue>Kidney</tissue>
    </source>
</reference>
<reference key="2">
    <citation type="journal article" date="2007" name="Proc. Natl. Acad. Sci. U.S.A.">
        <title>Large-scale phosphorylation analysis of mouse liver.</title>
        <authorList>
            <person name="Villen J."/>
            <person name="Beausoleil S.A."/>
            <person name="Gerber S.A."/>
            <person name="Gygi S.P."/>
        </authorList>
    </citation>
    <scope>PHOSPHORYLATION [LARGE SCALE ANALYSIS] AT SER-182; SER-186 AND SER-194</scope>
    <scope>IDENTIFICATION BY MASS SPECTROMETRY [LARGE SCALE ANALYSIS]</scope>
    <source>
        <tissue>Liver</tissue>
    </source>
</reference>
<reference key="3">
    <citation type="journal article" date="2009" name="Mol. Cell. Proteomics">
        <title>Large scale localization of protein phosphorylation by use of electron capture dissociation mass spectrometry.</title>
        <authorList>
            <person name="Sweet S.M."/>
            <person name="Bailey C.M."/>
            <person name="Cunningham D.L."/>
            <person name="Heath J.K."/>
            <person name="Cooper H.J."/>
        </authorList>
    </citation>
    <scope>PHOSPHORYLATION [LARGE SCALE ANALYSIS] AT SER-15</scope>
    <scope>IDENTIFICATION BY MASS SPECTROMETRY [LARGE SCALE ANALYSIS]</scope>
    <source>
        <tissue>Embryonic fibroblast</tissue>
    </source>
</reference>
<reference key="4">
    <citation type="journal article" date="2010" name="Cell">
        <title>A tissue-specific atlas of mouse protein phosphorylation and expression.</title>
        <authorList>
            <person name="Huttlin E.L."/>
            <person name="Jedrychowski M.P."/>
            <person name="Elias J.E."/>
            <person name="Goswami T."/>
            <person name="Rad R."/>
            <person name="Beausoleil S.A."/>
            <person name="Villen J."/>
            <person name="Haas W."/>
            <person name="Sowa M.E."/>
            <person name="Gygi S.P."/>
        </authorList>
    </citation>
    <scope>PHOSPHORYLATION [LARGE SCALE ANALYSIS] AT SER-177; SER-179; SER-182; SER-186 AND SER-194</scope>
    <scope>IDENTIFICATION BY MASS SPECTROMETRY [LARGE SCALE ANALYSIS]</scope>
    <source>
        <tissue>Brain</tissue>
        <tissue>Brown adipose tissue</tissue>
        <tissue>Heart</tissue>
        <tissue>Kidney</tissue>
        <tissue>Liver</tissue>
        <tissue>Lung</tissue>
        <tissue>Pancreas</tissue>
        <tissue>Spleen</tissue>
        <tissue>Testis</tissue>
    </source>
</reference>